<evidence type="ECO:0000250" key="1">
    <source>
        <dbReference type="UniProtKB" id="B3L2V1"/>
    </source>
</evidence>
<evidence type="ECO:0000255" key="2">
    <source>
        <dbReference type="HAMAP-Rule" id="MF_00662"/>
    </source>
</evidence>
<evidence type="ECO:0000256" key="3">
    <source>
        <dbReference type="SAM" id="MobiDB-lite"/>
    </source>
</evidence>
<evidence type="ECO:0000269" key="4">
    <source>
    </source>
</evidence>
<evidence type="ECO:0000269" key="5">
    <source>
    </source>
</evidence>
<evidence type="ECO:0000269" key="6">
    <source>
    </source>
</evidence>
<evidence type="ECO:0000305" key="7">
    <source>
    </source>
</evidence>
<proteinExistence type="evidence at protein level"/>
<comment type="function">
    <text evidence="2 6">Catalyzes the formation of phosphatidylethanolamine (PtdEtn) from phosphatidylserine (PtdSer). Only decarboxylates the lipid-linked form of the serine moiety, and not serine alone or derivatives like phosphoserine or glycerophosphoserine.</text>
</comment>
<comment type="catalytic activity">
    <reaction evidence="2 6">
        <text>a 1,2-diacyl-sn-glycero-3-phospho-L-serine + H(+) = a 1,2-diacyl-sn-glycero-3-phosphoethanolamine + CO2</text>
        <dbReference type="Rhea" id="RHEA:20828"/>
        <dbReference type="ChEBI" id="CHEBI:15378"/>
        <dbReference type="ChEBI" id="CHEBI:16526"/>
        <dbReference type="ChEBI" id="CHEBI:57262"/>
        <dbReference type="ChEBI" id="CHEBI:64612"/>
        <dbReference type="EC" id="4.1.1.65"/>
    </reaction>
</comment>
<comment type="cofactor">
    <cofactor evidence="2 5">
        <name>pyruvate</name>
        <dbReference type="ChEBI" id="CHEBI:15361"/>
    </cofactor>
    <text evidence="2 5">Binds 1 pyruvoyl group covalently per subunit.</text>
</comment>
<comment type="activity regulation">
    <text evidence="6">Inhibited by ionic detergents such as Barlox-12, an amine oxide, and sodium dodecyl sulfate.</text>
</comment>
<comment type="biophysicochemical properties">
    <phDependence>
        <text evidence="6">Optimum pH is 6.5-7.5.</text>
    </phDependence>
</comment>
<comment type="pathway">
    <text evidence="2 6">Phospholipid metabolism; phosphatidylethanolamine biosynthesis; phosphatidylethanolamine from CDP-diacylglycerol: step 2/2.</text>
</comment>
<comment type="subunit">
    <text evidence="2 5">Heterodimer of a large membrane-associated beta subunit and a small pyruvoyl-containing alpha subunit.</text>
</comment>
<comment type="subcellular location">
    <subcellularLocation>
        <location evidence="2 6">Cell membrane</location>
        <topology evidence="2 6">Peripheral membrane protein</topology>
    </subcellularLocation>
</comment>
<comment type="PTM">
    <text evidence="1 2 4 5">Is synthesized initially as an inactive proenzyme. Formation of the active enzyme involves a self-maturation process in which the active site pyruvoyl group is generated from an internal serine residue via an autocatalytic post-translational modification. Two non-identical subunits are generated from the proenzyme in this reaction, and the pyruvate is formed at the N-terminus of the alpha chain, which is derived from the carboxyl end of the proenzyme. The autoendoproteolytic cleavage occurs by a canonical serine protease mechanism, in which the side chain hydroxyl group of the serine supplies its oxygen atom to form the C-terminus of the beta chain, while the remainder of the serine residue undergoes an oxidative deamination to produce ammonia and the pyruvoyl prosthetic group on the alpha chain (PubMed:2406271, PubMed:3042771). During this reaction, the Ser that is part of the protease active site of the proenzyme becomes the pyruvoyl prosthetic group, which constitutes an essential element of the active site of the mature decarboxylase (By similarity).</text>
</comment>
<comment type="similarity">
    <text evidence="2">Belongs to the phosphatidylserine decarboxylase family. PSD-B subfamily. Prokaryotic type I sub-subfamily.</text>
</comment>
<dbReference type="EC" id="4.1.1.65" evidence="2"/>
<dbReference type="EMBL" id="J03916">
    <property type="protein sequence ID" value="AAA83896.1"/>
    <property type="molecule type" value="Genomic_DNA"/>
</dbReference>
<dbReference type="EMBL" id="U14003">
    <property type="protein sequence ID" value="AAA97059.1"/>
    <property type="molecule type" value="Genomic_DNA"/>
</dbReference>
<dbReference type="EMBL" id="U00096">
    <property type="protein sequence ID" value="AAC77120.1"/>
    <property type="molecule type" value="Genomic_DNA"/>
</dbReference>
<dbReference type="EMBL" id="AP009048">
    <property type="protein sequence ID" value="BAE78164.1"/>
    <property type="molecule type" value="Genomic_DNA"/>
</dbReference>
<dbReference type="PIR" id="A29234">
    <property type="entry name" value="A29234"/>
</dbReference>
<dbReference type="RefSeq" id="NP_418584.1">
    <property type="nucleotide sequence ID" value="NC_000913.3"/>
</dbReference>
<dbReference type="SMR" id="P0A8K1"/>
<dbReference type="BioGRID" id="4261081">
    <property type="interactions" value="81"/>
</dbReference>
<dbReference type="BioGRID" id="852965">
    <property type="interactions" value="1"/>
</dbReference>
<dbReference type="FunCoup" id="P0A8K1">
    <property type="interactions" value="530"/>
</dbReference>
<dbReference type="IntAct" id="P0A8K1">
    <property type="interactions" value="2"/>
</dbReference>
<dbReference type="STRING" id="511145.b4160"/>
<dbReference type="jPOST" id="P0A8K1"/>
<dbReference type="PaxDb" id="511145-b4160"/>
<dbReference type="EnsemblBacteria" id="AAC77120">
    <property type="protein sequence ID" value="AAC77120"/>
    <property type="gene ID" value="b4160"/>
</dbReference>
<dbReference type="GeneID" id="948673"/>
<dbReference type="KEGG" id="ecj:JW4121"/>
<dbReference type="KEGG" id="eco:b4160"/>
<dbReference type="KEGG" id="ecoc:C3026_22485"/>
<dbReference type="PATRIC" id="fig|1411691.4.peg.2538"/>
<dbReference type="EchoBASE" id="EB0768"/>
<dbReference type="eggNOG" id="COG0688">
    <property type="taxonomic scope" value="Bacteria"/>
</dbReference>
<dbReference type="HOGENOM" id="CLU_029061_4_1_6"/>
<dbReference type="InParanoid" id="P0A8K1"/>
<dbReference type="OMA" id="KDYHHYH"/>
<dbReference type="OrthoDB" id="9802030at2"/>
<dbReference type="PhylomeDB" id="P0A8K1"/>
<dbReference type="BioCyc" id="EcoCyc:PSD-MONOMER"/>
<dbReference type="BioCyc" id="MetaCyc:PSD-MONOMER"/>
<dbReference type="SABIO-RK" id="P0A8K1"/>
<dbReference type="UniPathway" id="UPA00558">
    <property type="reaction ID" value="UER00616"/>
</dbReference>
<dbReference type="PRO" id="PR:P0A8K1"/>
<dbReference type="Proteomes" id="UP000000625">
    <property type="component" value="Chromosome"/>
</dbReference>
<dbReference type="GO" id="GO:0005886">
    <property type="term" value="C:plasma membrane"/>
    <property type="evidence" value="ECO:0000314"/>
    <property type="project" value="EcoCyc"/>
</dbReference>
<dbReference type="GO" id="GO:0004609">
    <property type="term" value="F:phosphatidylserine decarboxylase activity"/>
    <property type="evidence" value="ECO:0000314"/>
    <property type="project" value="EcoCyc"/>
</dbReference>
<dbReference type="GO" id="GO:0042803">
    <property type="term" value="F:protein homodimerization activity"/>
    <property type="evidence" value="ECO:0000314"/>
    <property type="project" value="EcoCyc"/>
</dbReference>
<dbReference type="GO" id="GO:0006646">
    <property type="term" value="P:phosphatidylethanolamine biosynthetic process"/>
    <property type="evidence" value="ECO:0000315"/>
    <property type="project" value="EcoCyc"/>
</dbReference>
<dbReference type="GO" id="GO:0016540">
    <property type="term" value="P:protein autoprocessing"/>
    <property type="evidence" value="ECO:0000315"/>
    <property type="project" value="EcoCyc"/>
</dbReference>
<dbReference type="GO" id="GO:0031638">
    <property type="term" value="P:zymogen activation"/>
    <property type="evidence" value="ECO:0000315"/>
    <property type="project" value="EcoCyc"/>
</dbReference>
<dbReference type="HAMAP" id="MF_00662">
    <property type="entry name" value="PS_decarb_PSD_B_type1"/>
    <property type="match status" value="1"/>
</dbReference>
<dbReference type="InterPro" id="IPR003817">
    <property type="entry name" value="PS_Dcarbxylase"/>
</dbReference>
<dbReference type="InterPro" id="IPR033177">
    <property type="entry name" value="PSD-B"/>
</dbReference>
<dbReference type="InterPro" id="IPR033178">
    <property type="entry name" value="PSD_type1_pro"/>
</dbReference>
<dbReference type="NCBIfam" id="TIGR00163">
    <property type="entry name" value="PS_decarb"/>
    <property type="match status" value="1"/>
</dbReference>
<dbReference type="PANTHER" id="PTHR10067">
    <property type="entry name" value="PHOSPHATIDYLSERINE DECARBOXYLASE"/>
    <property type="match status" value="1"/>
</dbReference>
<dbReference type="PANTHER" id="PTHR10067:SF6">
    <property type="entry name" value="PHOSPHATIDYLSERINE DECARBOXYLASE PROENZYME, MITOCHONDRIAL"/>
    <property type="match status" value="1"/>
</dbReference>
<dbReference type="Pfam" id="PF02666">
    <property type="entry name" value="PS_Dcarbxylase"/>
    <property type="match status" value="1"/>
</dbReference>
<protein>
    <recommendedName>
        <fullName evidence="2">Phosphatidylserine decarboxylase proenzyme</fullName>
        <ecNumber evidence="2">4.1.1.65</ecNumber>
    </recommendedName>
    <component>
        <recommendedName>
            <fullName evidence="2">Phosphatidylserine decarboxylase alpha chain</fullName>
        </recommendedName>
    </component>
    <component>
        <recommendedName>
            <fullName evidence="2">Phosphatidylserine decarboxylase beta chain</fullName>
        </recommendedName>
    </component>
</protein>
<gene>
    <name evidence="2" type="primary">psd</name>
    <name type="ordered locus">b4160</name>
    <name type="ordered locus">JW4121</name>
</gene>
<sequence length="322" mass="35934">MLNSFKLSLQYILPKLWLTRLAGWGASKRAGWLTKLVIDLFVKYYKVDMKEAQKPDTASYRTFNEFFVRPLRDEVRPIDTDPNVLVMPADGVISQLGKIEEDKILQAKGHNYSLEALLAGNYLMADLFRNGTFVTTYLSPRDYHRVHMPCNGILREMIYVPGDLFSVNHLTAQNVPNLFARNERVICLFDTEFGPMAQILVGATIVGSIETVWAGTITPPREGIIKRWTWPAGENDGSVALLKGQEMGRFKLGSTVINLFAPGKVNLVEQLESLSVTKIGQPLAVSTETFVTPDAEPAPLPAEEIEAEHDASPLVDDKKDQV</sequence>
<reference key="1">
    <citation type="journal article" date="1988" name="J. Biol. Chem.">
        <title>Structural characterization of Escherichia coli phosphatidylserine decarboxylase.</title>
        <authorList>
            <person name="Li Q.-X."/>
            <person name="Dowhan W."/>
        </authorList>
    </citation>
    <scope>NUCLEOTIDE SEQUENCE [GENOMIC DNA]</scope>
    <scope>PARTIAL PROTEIN SEQUENCE</scope>
    <scope>CLEAVAGE SITE</scope>
    <scope>FORMYLATION AT MET-1</scope>
    <scope>PYRUVATE FORMATION AT SER-254</scope>
    <scope>COFACTOR</scope>
    <scope>SUBUNIT</scope>
</reference>
<reference key="2">
    <citation type="journal article" date="1995" name="Nucleic Acids Res.">
        <title>Analysis of the Escherichia coli genome VI: DNA sequence of the region from 92.8 through 100 minutes.</title>
        <authorList>
            <person name="Burland V.D."/>
            <person name="Plunkett G. III"/>
            <person name="Sofia H.J."/>
            <person name="Daniels D.L."/>
            <person name="Blattner F.R."/>
        </authorList>
    </citation>
    <scope>NUCLEOTIDE SEQUENCE [LARGE SCALE GENOMIC DNA]</scope>
    <source>
        <strain>K12 / MG1655 / ATCC 47076</strain>
    </source>
</reference>
<reference key="3">
    <citation type="journal article" date="1997" name="Science">
        <title>The complete genome sequence of Escherichia coli K-12.</title>
        <authorList>
            <person name="Blattner F.R."/>
            <person name="Plunkett G. III"/>
            <person name="Bloch C.A."/>
            <person name="Perna N.T."/>
            <person name="Burland V."/>
            <person name="Riley M."/>
            <person name="Collado-Vides J."/>
            <person name="Glasner J.D."/>
            <person name="Rode C.K."/>
            <person name="Mayhew G.F."/>
            <person name="Gregor J."/>
            <person name="Davis N.W."/>
            <person name="Kirkpatrick H.A."/>
            <person name="Goeden M.A."/>
            <person name="Rose D.J."/>
            <person name="Mau B."/>
            <person name="Shao Y."/>
        </authorList>
    </citation>
    <scope>NUCLEOTIDE SEQUENCE [LARGE SCALE GENOMIC DNA]</scope>
    <source>
        <strain>K12 / MG1655 / ATCC 47076</strain>
    </source>
</reference>
<reference key="4">
    <citation type="journal article" date="2006" name="Mol. Syst. Biol.">
        <title>Highly accurate genome sequences of Escherichia coli K-12 strains MG1655 and W3110.</title>
        <authorList>
            <person name="Hayashi K."/>
            <person name="Morooka N."/>
            <person name="Yamamoto Y."/>
            <person name="Fujita K."/>
            <person name="Isono K."/>
            <person name="Choi S."/>
            <person name="Ohtsubo E."/>
            <person name="Baba T."/>
            <person name="Wanner B.L."/>
            <person name="Mori H."/>
            <person name="Horiuchi T."/>
        </authorList>
    </citation>
    <scope>NUCLEOTIDE SEQUENCE [LARGE SCALE GENOMIC DNA]</scope>
    <source>
        <strain>K12 / W3110 / ATCC 27325 / DSM 5911</strain>
    </source>
</reference>
<reference key="5">
    <citation type="journal article" date="1974" name="J. Biol. Chem.">
        <title>Purification and properties of phosphatidylserine decarboxylase from Escherichia coli.</title>
        <authorList>
            <person name="Dowhan W."/>
            <person name="Wickner W.T."/>
            <person name="Kennedy E.P."/>
        </authorList>
    </citation>
    <scope>CATALYTIC ACTIVITY</scope>
    <scope>ACTIVITY REGULATION</scope>
    <scope>BIOPHYSICOCHEMICAL PROPERTIES</scope>
    <scope>PATHWAY</scope>
    <scope>SUBCELLULAR LOCATION</scope>
    <scope>FUNCTION</scope>
</reference>
<reference key="6">
    <citation type="journal article" date="1978" name="J. Biol. Chem.">
        <title>Identification of bound pyruvate essential for the activity of phosphatidylserine decarboxylase of Escherichia coli.</title>
        <authorList>
            <person name="Satre M."/>
            <person name="Kennedy E.P."/>
        </authorList>
    </citation>
    <scope>ACTIVE SITE</scope>
</reference>
<reference key="7">
    <citation type="journal article" date="1990" name="J. Biol. Chem.">
        <title>Studies on the mechanism of formation of the pyruvate prosthetic group of phosphatidylserine decarboxylase from Escherichia coli.</title>
        <authorList>
            <person name="Li Q.-X."/>
            <person name="Dowhan W."/>
        </authorList>
    </citation>
    <scope>MUTAGENESIS OF SER-254</scope>
</reference>
<reference key="8">
    <citation type="journal article" date="1992" name="Methods Enzymol.">
        <title>Phosphatidylserine decarboxylase from Escherichia coli.</title>
        <authorList>
            <person name="Dowhan W."/>
            <person name="Li Q.-X."/>
        </authorList>
    </citation>
    <scope>REVIEW</scope>
</reference>
<name>PSD_ECOLI</name>
<feature type="chain" id="PRO_0000029647" description="Phosphatidylserine decarboxylase beta chain" evidence="2">
    <location>
        <begin position="1"/>
        <end position="253"/>
    </location>
</feature>
<feature type="chain" id="PRO_0000029648" description="Phosphatidylserine decarboxylase alpha chain" evidence="2">
    <location>
        <begin position="254"/>
        <end position="322"/>
    </location>
</feature>
<feature type="region of interest" description="Disordered" evidence="3">
    <location>
        <begin position="293"/>
        <end position="322"/>
    </location>
</feature>
<feature type="compositionally biased region" description="Basic and acidic residues" evidence="3">
    <location>
        <begin position="308"/>
        <end position="322"/>
    </location>
</feature>
<feature type="active site" description="Charge relay system; for autoendoproteolytic cleavage activity" evidence="1 2">
    <location>
        <position position="90"/>
    </location>
</feature>
<feature type="active site" description="Charge relay system; for autoendoproteolytic cleavage activity" evidence="1 2">
    <location>
        <position position="147"/>
    </location>
</feature>
<feature type="active site" description="Charge relay system; for autoendoproteolytic cleavage activity" evidence="1 2">
    <location>
        <position position="254"/>
    </location>
</feature>
<feature type="active site" description="Schiff-base intermediate with substrate; via pyruvic acid; for decarboxylase activity" evidence="2 7">
    <location>
        <position position="254"/>
    </location>
</feature>
<feature type="site" description="Cleavage (non-hydrolytic); by autocatalysis" evidence="2 5">
    <location>
        <begin position="253"/>
        <end position="254"/>
    </location>
</feature>
<feature type="modified residue" description="N-formylmethionine" evidence="5">
    <location>
        <position position="1"/>
    </location>
</feature>
<feature type="modified residue" description="Pyruvic acid (Ser); by autocatalysis" evidence="2 5">
    <location>
        <position position="254"/>
    </location>
</feature>
<feature type="mutagenesis site" description="No processing of the proenzyme, complete loss of activity." evidence="4">
    <original>S</original>
    <variation>A</variation>
    <location>
        <position position="254"/>
    </location>
</feature>
<feature type="mutagenesis site" description="Reduced processing, 16% wild-type activity." evidence="4">
    <original>S</original>
    <variation>C</variation>
    <location>
        <position position="254"/>
    </location>
</feature>
<feature type="mutagenesis site" description="Reduced processing, 2% wild-type activity." evidence="4">
    <original>S</original>
    <variation>T</variation>
    <location>
        <position position="254"/>
    </location>
</feature>
<accession>P0A8K1</accession>
<accession>P10740</accession>
<accession>Q2M6E2</accession>
<keyword id="KW-1003">Cell membrane</keyword>
<keyword id="KW-0210">Decarboxylase</keyword>
<keyword id="KW-0903">Direct protein sequencing</keyword>
<keyword id="KW-0291">Formylation</keyword>
<keyword id="KW-0444">Lipid biosynthesis</keyword>
<keyword id="KW-0443">Lipid metabolism</keyword>
<keyword id="KW-0456">Lyase</keyword>
<keyword id="KW-0472">Membrane</keyword>
<keyword id="KW-0594">Phospholipid biosynthesis</keyword>
<keyword id="KW-1208">Phospholipid metabolism</keyword>
<keyword id="KW-0670">Pyruvate</keyword>
<keyword id="KW-1185">Reference proteome</keyword>
<keyword id="KW-0865">Zymogen</keyword>
<organism>
    <name type="scientific">Escherichia coli (strain K12)</name>
    <dbReference type="NCBI Taxonomy" id="83333"/>
    <lineage>
        <taxon>Bacteria</taxon>
        <taxon>Pseudomonadati</taxon>
        <taxon>Pseudomonadota</taxon>
        <taxon>Gammaproteobacteria</taxon>
        <taxon>Enterobacterales</taxon>
        <taxon>Enterobacteriaceae</taxon>
        <taxon>Escherichia</taxon>
    </lineage>
</organism>